<protein>
    <recommendedName>
        <fullName evidence="1">S-adenosylmethionine decarboxylase proenzyme</fullName>
        <shortName evidence="1">AdoMetDC</shortName>
        <shortName evidence="1">SAMDC</shortName>
        <ecNumber evidence="1">4.1.1.50</ecNumber>
    </recommendedName>
    <component>
        <recommendedName>
            <fullName evidence="1">S-adenosylmethionine decarboxylase beta chain</fullName>
        </recommendedName>
    </component>
    <component>
        <recommendedName>
            <fullName evidence="1">S-adenosylmethionine decarboxylase alpha chain</fullName>
        </recommendedName>
    </component>
</protein>
<organism>
    <name type="scientific">Cronobacter sakazakii (strain ATCC BAA-894)</name>
    <name type="common">Enterobacter sakazakii</name>
    <dbReference type="NCBI Taxonomy" id="290339"/>
    <lineage>
        <taxon>Bacteria</taxon>
        <taxon>Pseudomonadati</taxon>
        <taxon>Pseudomonadota</taxon>
        <taxon>Gammaproteobacteria</taxon>
        <taxon>Enterobacterales</taxon>
        <taxon>Enterobacteriaceae</taxon>
        <taxon>Cronobacter</taxon>
    </lineage>
</organism>
<evidence type="ECO:0000255" key="1">
    <source>
        <dbReference type="HAMAP-Rule" id="MF_00465"/>
    </source>
</evidence>
<feature type="chain" id="PRO_1000013689" description="S-adenosylmethionine decarboxylase beta chain" evidence="1">
    <location>
        <begin position="1"/>
        <end position="111"/>
    </location>
</feature>
<feature type="chain" id="PRO_0000315015" description="S-adenosylmethionine decarboxylase alpha chain" evidence="1">
    <location>
        <begin position="112"/>
        <end position="264"/>
    </location>
</feature>
<feature type="active site" description="Schiff-base intermediate with substrate; via pyruvic acid" evidence="1">
    <location>
        <position position="112"/>
    </location>
</feature>
<feature type="active site" description="Proton acceptor; for processing activity" evidence="1">
    <location>
        <position position="117"/>
    </location>
</feature>
<feature type="active site" description="Proton donor; for catalytic activity" evidence="1">
    <location>
        <position position="140"/>
    </location>
</feature>
<feature type="site" description="Cleavage (non-hydrolytic); by autolysis" evidence="1">
    <location>
        <begin position="111"/>
        <end position="112"/>
    </location>
</feature>
<feature type="modified residue" description="Pyruvic acid (Ser); by autocatalysis" evidence="1">
    <location>
        <position position="112"/>
    </location>
</feature>
<comment type="function">
    <text evidence="1">Catalyzes the decarboxylation of S-adenosylmethionine to S-adenosylmethioninamine (dcAdoMet), the propylamine donor required for the synthesis of the polyamines spermine and spermidine from the diamine putrescine.</text>
</comment>
<comment type="catalytic activity">
    <reaction evidence="1">
        <text>S-adenosyl-L-methionine + H(+) = S-adenosyl 3-(methylsulfanyl)propylamine + CO2</text>
        <dbReference type="Rhea" id="RHEA:15981"/>
        <dbReference type="ChEBI" id="CHEBI:15378"/>
        <dbReference type="ChEBI" id="CHEBI:16526"/>
        <dbReference type="ChEBI" id="CHEBI:57443"/>
        <dbReference type="ChEBI" id="CHEBI:59789"/>
        <dbReference type="EC" id="4.1.1.50"/>
    </reaction>
</comment>
<comment type="cofactor">
    <cofactor evidence="1">
        <name>pyruvate</name>
        <dbReference type="ChEBI" id="CHEBI:15361"/>
    </cofactor>
    <text evidence="1">Binds 1 pyruvoyl group covalently per subunit.</text>
</comment>
<comment type="pathway">
    <text evidence="1">Amine and polyamine biosynthesis; S-adenosylmethioninamine biosynthesis; S-adenosylmethioninamine from S-adenosyl-L-methionine: step 1/1.</text>
</comment>
<comment type="subunit">
    <text evidence="1">Heterooctamer of four alpha and four beta chains arranged as a tetramer of alpha/beta heterodimers.</text>
</comment>
<comment type="PTM">
    <text evidence="1">Is synthesized initially as an inactive proenzyme. Formation of the active enzyme involves a self-maturation process in which the active site pyruvoyl group is generated from an internal serine residue via an autocatalytic post-translational modification. Two non-identical subunits are generated from the proenzyme in this reaction, and the pyruvate is formed at the N-terminus of the alpha chain, which is derived from the carboxyl end of the proenzyme. The post-translation cleavage follows an unusual pathway, termed non-hydrolytic serinolysis, in which the side chain hydroxyl group of the serine supplies its oxygen atom to form the C-terminus of the beta chain, while the remainder of the serine residue undergoes an oxidative deamination to produce ammonia and the pyruvoyl group blocking the N-terminus of the alpha chain.</text>
</comment>
<comment type="similarity">
    <text evidence="1">Belongs to the prokaryotic AdoMetDC family. Type 2 subfamily.</text>
</comment>
<dbReference type="EC" id="4.1.1.50" evidence="1"/>
<dbReference type="EMBL" id="CP000783">
    <property type="protein sequence ID" value="ABU78435.1"/>
    <property type="molecule type" value="Genomic_DNA"/>
</dbReference>
<dbReference type="RefSeq" id="WP_004387874.1">
    <property type="nucleotide sequence ID" value="NC_009778.1"/>
</dbReference>
<dbReference type="SMR" id="A7MGP2"/>
<dbReference type="GeneID" id="56731901"/>
<dbReference type="KEGG" id="esa:ESA_03213"/>
<dbReference type="HOGENOM" id="CLU_092007_0_0_6"/>
<dbReference type="UniPathway" id="UPA00331">
    <property type="reaction ID" value="UER00451"/>
</dbReference>
<dbReference type="Proteomes" id="UP000000260">
    <property type="component" value="Chromosome"/>
</dbReference>
<dbReference type="GO" id="GO:0005829">
    <property type="term" value="C:cytosol"/>
    <property type="evidence" value="ECO:0007669"/>
    <property type="project" value="TreeGrafter"/>
</dbReference>
<dbReference type="GO" id="GO:0004014">
    <property type="term" value="F:adenosylmethionine decarboxylase activity"/>
    <property type="evidence" value="ECO:0007669"/>
    <property type="project" value="UniProtKB-UniRule"/>
</dbReference>
<dbReference type="GO" id="GO:0008295">
    <property type="term" value="P:spermidine biosynthetic process"/>
    <property type="evidence" value="ECO:0007669"/>
    <property type="project" value="UniProtKB-UniRule"/>
</dbReference>
<dbReference type="FunFam" id="3.60.90.10:FF:000001">
    <property type="entry name" value="S-adenosylmethionine decarboxylase proenzyme"/>
    <property type="match status" value="1"/>
</dbReference>
<dbReference type="Gene3D" id="3.60.90.10">
    <property type="entry name" value="S-adenosylmethionine decarboxylase"/>
    <property type="match status" value="1"/>
</dbReference>
<dbReference type="HAMAP" id="MF_00465">
    <property type="entry name" value="AdoMetDC_2"/>
    <property type="match status" value="1"/>
</dbReference>
<dbReference type="InterPro" id="IPR003826">
    <property type="entry name" value="AdoMetDC_fam_prok"/>
</dbReference>
<dbReference type="InterPro" id="IPR009165">
    <property type="entry name" value="S-AdoMet_deCO2ase_bac"/>
</dbReference>
<dbReference type="InterPro" id="IPR016067">
    <property type="entry name" value="S-AdoMet_deCO2ase_core"/>
</dbReference>
<dbReference type="NCBIfam" id="TIGR03331">
    <property type="entry name" value="SAM_DCase_Eco"/>
    <property type="match status" value="1"/>
</dbReference>
<dbReference type="PANTHER" id="PTHR33866">
    <property type="entry name" value="S-ADENOSYLMETHIONINE DECARBOXYLASE PROENZYME"/>
    <property type="match status" value="1"/>
</dbReference>
<dbReference type="PANTHER" id="PTHR33866:SF1">
    <property type="entry name" value="S-ADENOSYLMETHIONINE DECARBOXYLASE PROENZYME"/>
    <property type="match status" value="1"/>
</dbReference>
<dbReference type="Pfam" id="PF02675">
    <property type="entry name" value="AdoMet_dc"/>
    <property type="match status" value="1"/>
</dbReference>
<dbReference type="PIRSF" id="PIRSF001356">
    <property type="entry name" value="SAM_decarboxylas"/>
    <property type="match status" value="1"/>
</dbReference>
<dbReference type="SUPFAM" id="SSF56276">
    <property type="entry name" value="S-adenosylmethionine decarboxylase"/>
    <property type="match status" value="1"/>
</dbReference>
<reference key="1">
    <citation type="journal article" date="2010" name="PLoS ONE">
        <title>Genome sequence of Cronobacter sakazakii BAA-894 and comparative genomic hybridization analysis with other Cronobacter species.</title>
        <authorList>
            <person name="Kucerova E."/>
            <person name="Clifton S.W."/>
            <person name="Xia X.Q."/>
            <person name="Long F."/>
            <person name="Porwollik S."/>
            <person name="Fulton L."/>
            <person name="Fronick C."/>
            <person name="Minx P."/>
            <person name="Kyung K."/>
            <person name="Warren W."/>
            <person name="Fulton R."/>
            <person name="Feng D."/>
            <person name="Wollam A."/>
            <person name="Shah N."/>
            <person name="Bhonagiri V."/>
            <person name="Nash W.E."/>
            <person name="Hallsworth-Pepin K."/>
            <person name="Wilson R.K."/>
            <person name="McClelland M."/>
            <person name="Forsythe S.J."/>
        </authorList>
    </citation>
    <scope>NUCLEOTIDE SEQUENCE [LARGE SCALE GENOMIC DNA]</scope>
    <source>
        <strain>ATCC BAA-894</strain>
    </source>
</reference>
<gene>
    <name evidence="1" type="primary">speD</name>
    <name type="ordered locus">ESA_03213</name>
</gene>
<proteinExistence type="inferred from homology"/>
<accession>A7MGP2</accession>
<name>SPED_CROS8</name>
<keyword id="KW-0068">Autocatalytic cleavage</keyword>
<keyword id="KW-0210">Decarboxylase</keyword>
<keyword id="KW-0456">Lyase</keyword>
<keyword id="KW-0620">Polyamine biosynthesis</keyword>
<keyword id="KW-0670">Pyruvate</keyword>
<keyword id="KW-1185">Reference proteome</keyword>
<keyword id="KW-0949">S-adenosyl-L-methionine</keyword>
<keyword id="KW-0704">Schiff base</keyword>
<keyword id="KW-0745">Spermidine biosynthesis</keyword>
<keyword id="KW-0865">Zymogen</keyword>
<sequence length="264" mass="30582">MKKLKLHGFNNLTKSLSFCIYDICYAKTAEERDGYIAYIDELYNANRLTEILTETCSIIGANILNIARQDYEPQGASVTILVSEEPVDPQLIDKTEHPGPLPETVVAHLDKSHICVHTYPESHPEGGLCTFRADIEVSTCGVISPLKALNYLIHQLESDIVTIDYRVRGFTRDVNGMKHFIDHEINSIQNFMSDDIKSLYDMMDVNVYQENIFHTKMLLKEFDLKHYMFHTRPEELTEEERKVITDQLWKEMREIYYGRNIPSV</sequence>